<reference key="1">
    <citation type="submission" date="1999-05" db="EMBL/GenBank/DDBJ databases">
        <title>Molecular analysis of a 21.1-kb fragment of wheat chloroplast DNA bearing RNA polymerase subunit (rpo) genes.</title>
        <authorList>
            <person name="Matsuoka Y."/>
            <person name="Tsunewaki K."/>
            <person name="Ohnishi Y."/>
        </authorList>
    </citation>
    <scope>NUCLEOTIDE SEQUENCE [GENOMIC DNA]</scope>
    <source>
        <strain>cv. Chinese Spring</strain>
    </source>
</reference>
<reference key="2">
    <citation type="journal article" date="2000" name="Plant Mol. Biol. Rep.">
        <title>Chinese spring wheat (Triticum aestivum L.) chloroplast genome: complete sequence and contig clones.</title>
        <authorList>
            <person name="Ogihara Y."/>
            <person name="Isono K."/>
            <person name="Kojima T."/>
            <person name="Endo A."/>
            <person name="Hanaoka M."/>
            <person name="Shiina T."/>
            <person name="Terachi T."/>
            <person name="Utsugi S."/>
            <person name="Murata M."/>
            <person name="Mori N."/>
            <person name="Takumi S."/>
            <person name="Ikeo K."/>
            <person name="Gojobori T."/>
            <person name="Murai R."/>
            <person name="Murai K."/>
            <person name="Matsuoka Y."/>
            <person name="Ohnishi Y."/>
            <person name="Tajiri H."/>
            <person name="Tsunewaki K."/>
        </authorList>
    </citation>
    <scope>NUCLEOTIDE SEQUENCE [LARGE SCALE GENOMIC DNA]</scope>
    <source>
        <strain>cv. Chinese Spring</strain>
    </source>
</reference>
<proteinExistence type="inferred from homology"/>
<comment type="function">
    <text evidence="1">DNA-dependent RNA polymerase catalyzes the transcription of DNA into RNA using the four ribonucleoside triphosphates as substrates.</text>
</comment>
<comment type="catalytic activity">
    <reaction evidence="1">
        <text>RNA(n) + a ribonucleoside 5'-triphosphate = RNA(n+1) + diphosphate</text>
        <dbReference type="Rhea" id="RHEA:21248"/>
        <dbReference type="Rhea" id="RHEA-COMP:14527"/>
        <dbReference type="Rhea" id="RHEA-COMP:17342"/>
        <dbReference type="ChEBI" id="CHEBI:33019"/>
        <dbReference type="ChEBI" id="CHEBI:61557"/>
        <dbReference type="ChEBI" id="CHEBI:140395"/>
        <dbReference type="EC" id="2.7.7.6"/>
    </reaction>
</comment>
<comment type="cofactor">
    <cofactor evidence="1">
        <name>Mg(2+)</name>
        <dbReference type="ChEBI" id="CHEBI:18420"/>
    </cofactor>
    <text evidence="1">Binds 1 Mg(2+) ion per subunit.</text>
</comment>
<comment type="cofactor">
    <cofactor evidence="1">
        <name>Zn(2+)</name>
        <dbReference type="ChEBI" id="CHEBI:29105"/>
    </cofactor>
    <text evidence="1">Binds 1 Zn(2+) ion per subunit.</text>
</comment>
<comment type="subunit">
    <text evidence="1">In plastids the minimal PEP RNA polymerase catalytic core is composed of four subunits: alpha, beta, beta', and beta''. When a (nuclear-encoded) sigma factor is associated with the core the holoenzyme is formed, which can initiate transcription.</text>
</comment>
<comment type="subcellular location">
    <subcellularLocation>
        <location evidence="1">Plastid</location>
        <location evidence="1">Chloroplast</location>
    </subcellularLocation>
</comment>
<comment type="similarity">
    <text evidence="1">Belongs to the RNA polymerase beta' chain family. RpoC1 subfamily.</text>
</comment>
<gene>
    <name evidence="1" type="primary">rpoC1</name>
</gene>
<accession>Q9XPS8</accession>
<sequence length="683" mass="78287">MIDQYKHQQLQIGLVSPQQIKAWANKNLPNGEVVGEVTRPSTFHYKTDKPEKDGLFCERIFGPIKSGICACGNSRASGAENEDERFCQKCGVEFVDSRIRRYQMGYIKLACPVTHVWYLKGLPSYIANLLDKPLKKLEGLVYGDFSFARPSTKKPTFLRLRGLFEEEIASCNHSISPFFSTPGFATFRNREIATGAGAIREQLADLDLRIIIENSLVEWKELEDEGYSGDEWEDRKRRIRKVFLIRRMQLAKHFIQTNVEPEWMVLCLLPVLPPELRPIVYRSGDKVVTSDINELYKRVIRRNNNLAYLLKRSELAPADLVMCQEKLVQEAVDTLLDSGSRGQPTRDGHNKVYKSLSDVIEGKEGRFRETLLGKRVDYSGRSVIVVGPSLSLHQCGLPLEIAIKLFQLFVIRDLITKRATSNVRIAKRKIWEKEPIVWEILQEVMRGHPVLLNRAPTLHRLGIQAFQPTLVEGRTISLHPLVCKGFNADFDGDQMAVHLPLSLEAQAEARLLMFSHMNLLSPAIGDPICVPTQDMLIGLYVLTIGKRRGICANRYNSCRNYPNLKVNYNNNNNSKYRKDKEPHFSSSYDALGAYRQKLISLDSPLWLRWNLDQRVIGSREVPIEVQYESLGTYHEIYAHYLIMGNRKKEIRSIYIRTTLGHISFYREIEEAIQGFSQAYSYTT</sequence>
<protein>
    <recommendedName>
        <fullName evidence="1">DNA-directed RNA polymerase subunit beta'</fullName>
        <ecNumber evidence="1">2.7.7.6</ecNumber>
    </recommendedName>
    <alternativeName>
        <fullName evidence="1">PEP</fullName>
    </alternativeName>
    <alternativeName>
        <fullName evidence="1">Plastid-encoded RNA polymerase subunit beta'</fullName>
        <shortName evidence="1">RNA polymerase subunit beta'</shortName>
    </alternativeName>
</protein>
<geneLocation type="chloroplast"/>
<keyword id="KW-0150">Chloroplast</keyword>
<keyword id="KW-0240">DNA-directed RNA polymerase</keyword>
<keyword id="KW-0460">Magnesium</keyword>
<keyword id="KW-0479">Metal-binding</keyword>
<keyword id="KW-0548">Nucleotidyltransferase</keyword>
<keyword id="KW-0934">Plastid</keyword>
<keyword id="KW-1185">Reference proteome</keyword>
<keyword id="KW-0804">Transcription</keyword>
<keyword id="KW-0808">Transferase</keyword>
<keyword id="KW-0862">Zinc</keyword>
<name>RPOC1_WHEAT</name>
<feature type="chain" id="PRO_0000067901" description="DNA-directed RNA polymerase subunit beta'">
    <location>
        <begin position="1"/>
        <end position="683"/>
    </location>
</feature>
<feature type="binding site" evidence="1">
    <location>
        <position position="69"/>
    </location>
    <ligand>
        <name>Zn(2+)</name>
        <dbReference type="ChEBI" id="CHEBI:29105"/>
    </ligand>
</feature>
<feature type="binding site" evidence="1">
    <location>
        <position position="71"/>
    </location>
    <ligand>
        <name>Zn(2+)</name>
        <dbReference type="ChEBI" id="CHEBI:29105"/>
    </ligand>
</feature>
<feature type="binding site" evidence="1">
    <location>
        <position position="87"/>
    </location>
    <ligand>
        <name>Zn(2+)</name>
        <dbReference type="ChEBI" id="CHEBI:29105"/>
    </ligand>
</feature>
<feature type="binding site" evidence="1">
    <location>
        <position position="90"/>
    </location>
    <ligand>
        <name>Zn(2+)</name>
        <dbReference type="ChEBI" id="CHEBI:29105"/>
    </ligand>
</feature>
<feature type="binding site" evidence="1">
    <location>
        <position position="489"/>
    </location>
    <ligand>
        <name>Mg(2+)</name>
        <dbReference type="ChEBI" id="CHEBI:18420"/>
    </ligand>
</feature>
<feature type="binding site" evidence="1">
    <location>
        <position position="491"/>
    </location>
    <ligand>
        <name>Mg(2+)</name>
        <dbReference type="ChEBI" id="CHEBI:18420"/>
    </ligand>
</feature>
<feature type="binding site" evidence="1">
    <location>
        <position position="493"/>
    </location>
    <ligand>
        <name>Mg(2+)</name>
        <dbReference type="ChEBI" id="CHEBI:18420"/>
    </ligand>
</feature>
<organism>
    <name type="scientific">Triticum aestivum</name>
    <name type="common">Wheat</name>
    <dbReference type="NCBI Taxonomy" id="4565"/>
    <lineage>
        <taxon>Eukaryota</taxon>
        <taxon>Viridiplantae</taxon>
        <taxon>Streptophyta</taxon>
        <taxon>Embryophyta</taxon>
        <taxon>Tracheophyta</taxon>
        <taxon>Spermatophyta</taxon>
        <taxon>Magnoliopsida</taxon>
        <taxon>Liliopsida</taxon>
        <taxon>Poales</taxon>
        <taxon>Poaceae</taxon>
        <taxon>BOP clade</taxon>
        <taxon>Pooideae</taxon>
        <taxon>Triticodae</taxon>
        <taxon>Triticeae</taxon>
        <taxon>Triticinae</taxon>
        <taxon>Triticum</taxon>
    </lineage>
</organism>
<dbReference type="EC" id="2.7.7.6" evidence="1"/>
<dbReference type="EMBL" id="AB027572">
    <property type="protein sequence ID" value="BAA78041.1"/>
    <property type="molecule type" value="Genomic_DNA"/>
</dbReference>
<dbReference type="EMBL" id="AB042240">
    <property type="protein sequence ID" value="BAB47025.1"/>
    <property type="molecule type" value="Genomic_DNA"/>
</dbReference>
<dbReference type="RefSeq" id="NP_114250.1">
    <property type="nucleotide sequence ID" value="NC_002762.1"/>
</dbReference>
<dbReference type="SMR" id="Q9XPS8"/>
<dbReference type="STRING" id="4565.Q9XPS8"/>
<dbReference type="PaxDb" id="4565-EPlTAEP00000010079"/>
<dbReference type="EnsemblPlants" id="TraesKARUn01G0035990.1">
    <property type="protein sequence ID" value="cds.TraesKARUn01G0035990.1"/>
    <property type="gene ID" value="TraesKARUn01G0035990"/>
</dbReference>
<dbReference type="EnsemblPlants" id="TraesKARUn01G0036270.1">
    <property type="protein sequence ID" value="cds.TraesKARUn01G0036270.1"/>
    <property type="gene ID" value="TraesKARUn01G0036270"/>
</dbReference>
<dbReference type="EnsemblPlants" id="TraesKARUn01G0065770.1">
    <property type="protein sequence ID" value="cds.TraesKARUn01G0065770.1"/>
    <property type="gene ID" value="TraesKARUn01G0065770"/>
</dbReference>
<dbReference type="EnsemblPlants" id="TraesKARUn01G0069640.1">
    <property type="protein sequence ID" value="cds.TraesKARUn01G0069640.1"/>
    <property type="gene ID" value="TraesKARUn01G0069640"/>
</dbReference>
<dbReference type="EnsemblPlants" id="TraesKARUn01G0071460.1">
    <property type="protein sequence ID" value="cds.TraesKARUn01G0071460.1"/>
    <property type="gene ID" value="TraesKARUn01G0071460"/>
</dbReference>
<dbReference type="EnsemblPlants" id="TraesKARUn01G0072470.1">
    <property type="protein sequence ID" value="cds.TraesKARUn01G0072470.1"/>
    <property type="gene ID" value="TraesKARUn01G0072470"/>
</dbReference>
<dbReference type="EnsemblPlants" id="TraesKARUn01G0074060.1">
    <property type="protein sequence ID" value="cds.TraesKARUn01G0074060.1"/>
    <property type="gene ID" value="TraesKARUn01G0074060"/>
</dbReference>
<dbReference type="EnsemblPlants" id="TraesKARUn01G0079960.1">
    <property type="protein sequence ID" value="cds.TraesKARUn01G0079960.1"/>
    <property type="gene ID" value="TraesKARUn01G0079960"/>
</dbReference>
<dbReference type="EnsemblPlants" id="TraesKARUn01G0080050.1">
    <property type="protein sequence ID" value="cds.TraesKARUn01G0080050.1"/>
    <property type="gene ID" value="TraesKARUn01G0080050"/>
</dbReference>
<dbReference type="EnsemblPlants" id="TraesKARUn01G0080190.1">
    <property type="protein sequence ID" value="cds.TraesKARUn01G0080190.1"/>
    <property type="gene ID" value="TraesKARUn01G0080190"/>
</dbReference>
<dbReference type="EnsemblPlants" id="TraesKARUn01G0081090.1">
    <property type="protein sequence ID" value="cds.TraesKARUn01G0081090.1"/>
    <property type="gene ID" value="TraesKARUn01G0081090"/>
</dbReference>
<dbReference type="EnsemblPlants" id="TraesKARUn01G0081710.1">
    <property type="protein sequence ID" value="cds.TraesKARUn01G0081710.1"/>
    <property type="gene ID" value="TraesKARUn01G0081710"/>
</dbReference>
<dbReference type="EnsemblPlants" id="TraesKARUn01G0082190.1">
    <property type="protein sequence ID" value="cds.TraesKARUn01G0082190.1"/>
    <property type="gene ID" value="TraesKARUn01G0082190"/>
</dbReference>
<dbReference type="EnsemblPlants" id="TraesKARUn01G0082380.1">
    <property type="protein sequence ID" value="cds.TraesKARUn01G0082380.1"/>
    <property type="gene ID" value="TraesKARUn01G0082380"/>
</dbReference>
<dbReference type="EnsemblPlants" id="TraesKARUn01G0082600.1">
    <property type="protein sequence ID" value="cds.TraesKARUn01G0082600.1"/>
    <property type="gene ID" value="TraesKARUn01G0082600"/>
</dbReference>
<dbReference type="EnsemblPlants" id="TraesKARUn01G0082740.1">
    <property type="protein sequence ID" value="cds.TraesKARUn01G0082740.1"/>
    <property type="gene ID" value="TraesKARUn01G0082740"/>
</dbReference>
<dbReference type="EnsemblPlants" id="TraesKARUn01G0087650.1">
    <property type="protein sequence ID" value="cds.TraesKARUn01G0087650.1"/>
    <property type="gene ID" value="TraesKARUn01G0087650"/>
</dbReference>
<dbReference type="EnsemblPlants" id="TraesKARUn01G0093730.1">
    <property type="protein sequence ID" value="cds.TraesKARUn01G0093730.1"/>
    <property type="gene ID" value="TraesKARUn01G0093730"/>
</dbReference>
<dbReference type="EnsemblPlants" id="TraesKARUn01G0095860.1">
    <property type="protein sequence ID" value="cds.TraesKARUn01G0095860.1"/>
    <property type="gene ID" value="TraesKARUn01G0095860"/>
</dbReference>
<dbReference type="EnsemblPlants" id="TraesKARUn01G0100450.1">
    <property type="protein sequence ID" value="cds.TraesKARUn01G0100450.1"/>
    <property type="gene ID" value="TraesKARUn01G0100450"/>
</dbReference>
<dbReference type="EnsemblPlants" id="TraesKARUn01G0108560.1">
    <property type="protein sequence ID" value="cds.TraesKARUn01G0108560.1"/>
    <property type="gene ID" value="TraesKARUn01G0108560"/>
</dbReference>
<dbReference type="EnsemblPlants" id="TraesKARUn01G0109010.1">
    <property type="protein sequence ID" value="cds.TraesKARUn01G0109010.1"/>
    <property type="gene ID" value="TraesKARUn01G0109010"/>
</dbReference>
<dbReference type="EnsemblPlants" id="TraesKARUn01G0109110.1">
    <property type="protein sequence ID" value="cds.TraesKARUn01G0109110.1"/>
    <property type="gene ID" value="TraesKARUn01G0109110"/>
</dbReference>
<dbReference type="EnsemblPlants" id="TraesKARUn01G0109260.1">
    <property type="protein sequence ID" value="cds.TraesKARUn01G0109260.1"/>
    <property type="gene ID" value="TraesKARUn01G0109260"/>
</dbReference>
<dbReference type="EnsemblPlants" id="TraesKARUn01G0112950.1">
    <property type="protein sequence ID" value="cds.TraesKARUn01G0112950.1"/>
    <property type="gene ID" value="TraesKARUn01G0112950"/>
</dbReference>
<dbReference type="EnsemblPlants" id="TraesKARUn01G0113870.1">
    <property type="protein sequence ID" value="cds.TraesKARUn01G0113870.1"/>
    <property type="gene ID" value="TraesKARUn01G0113870"/>
</dbReference>
<dbReference type="EnsemblPlants" id="TraesKARUn01G0115790.1">
    <property type="protein sequence ID" value="cds.TraesKARUn01G0115790.1"/>
    <property type="gene ID" value="TraesKARUn01G0115790"/>
</dbReference>
<dbReference type="EnsemblPlants" id="TraesKARUn01G0118640.1">
    <property type="protein sequence ID" value="cds.TraesKARUn01G0118640.1"/>
    <property type="gene ID" value="TraesKARUn01G0118640"/>
</dbReference>
<dbReference type="EnsemblPlants" id="TraesKARUn01G0121790.1">
    <property type="protein sequence ID" value="cds.TraesKARUn01G0121790.1"/>
    <property type="gene ID" value="TraesKARUn01G0121790"/>
</dbReference>
<dbReference type="EnsemblPlants" id="TraesKARUn01G0128690.1">
    <property type="protein sequence ID" value="cds.TraesKARUn01G0128690.1"/>
    <property type="gene ID" value="TraesKARUn01G0128690"/>
</dbReference>
<dbReference type="EnsemblPlants" id="TraesKARUn01G0137750.1">
    <property type="protein sequence ID" value="cds.TraesKARUn01G0137750.1"/>
    <property type="gene ID" value="TraesKARUn01G0137750"/>
</dbReference>
<dbReference type="EnsemblPlants" id="TraesKARUn01G0138370.1">
    <property type="protein sequence ID" value="cds.TraesKARUn01G0138370.1"/>
    <property type="gene ID" value="TraesKARUn01G0138370"/>
</dbReference>
<dbReference type="EnsemblPlants" id="TraesKARUn01G0143400.1">
    <property type="protein sequence ID" value="cds.TraesKARUn01G0143400.1"/>
    <property type="gene ID" value="TraesKARUn01G0143400"/>
</dbReference>
<dbReference type="EnsemblPlants" id="TraesKARUn01G0150110.1">
    <property type="protein sequence ID" value="cds.TraesKARUn01G0150110.1"/>
    <property type="gene ID" value="TraesKARUn01G0150110"/>
</dbReference>
<dbReference type="EnsemblPlants" id="TraesKARUn01G0150720.1">
    <property type="protein sequence ID" value="cds.TraesKARUn01G0150720.1"/>
    <property type="gene ID" value="TraesKARUn01G0150720"/>
</dbReference>
<dbReference type="EnsemblPlants" id="TraesKARUn01G0150830.1">
    <property type="protein sequence ID" value="cds.TraesKARUn01G0150830.1"/>
    <property type="gene ID" value="TraesKARUn01G0150830"/>
</dbReference>
<dbReference type="EnsemblPlants" id="TraesKARUn01G0151090.1">
    <property type="protein sequence ID" value="cds.TraesKARUn01G0151090.1"/>
    <property type="gene ID" value="TraesKARUn01G0151090"/>
</dbReference>
<dbReference type="EnsemblPlants" id="TraesKARUn01G0151100.1">
    <property type="protein sequence ID" value="cds.TraesKARUn01G0151100.1"/>
    <property type="gene ID" value="TraesKARUn01G0151100"/>
</dbReference>
<dbReference type="EnsemblPlants" id="TraesKARUn01G0151480.1">
    <property type="protein sequence ID" value="cds.TraesKARUn01G0151480.1"/>
    <property type="gene ID" value="TraesKARUn01G0151480"/>
</dbReference>
<dbReference type="EnsemblPlants" id="TraesKARUn01G0151640.1">
    <property type="protein sequence ID" value="cds.TraesKARUn01G0151640.1"/>
    <property type="gene ID" value="TraesKARUn01G0151640"/>
</dbReference>
<dbReference type="EnsemblPlants" id="TraesKARUn01G0151900.1">
    <property type="protein sequence ID" value="cds.TraesKARUn01G0151900.1"/>
    <property type="gene ID" value="TraesKARUn01G0151900"/>
</dbReference>
<dbReference type="EnsemblPlants" id="TraesKARUn01G0151980.1">
    <property type="protein sequence ID" value="cds.TraesKARUn01G0151980.1"/>
    <property type="gene ID" value="TraesKARUn01G0151980"/>
</dbReference>
<dbReference type="EnsemblPlants" id="TraesKARUn01G0152400.1">
    <property type="protein sequence ID" value="cds.TraesKARUn01G0152400.1"/>
    <property type="gene ID" value="TraesKARUn01G0152400"/>
</dbReference>
<dbReference type="EnsemblPlants" id="TraesKARUn01G0152540.1">
    <property type="protein sequence ID" value="cds.TraesKARUn01G0152540.1"/>
    <property type="gene ID" value="TraesKARUn01G0152540"/>
</dbReference>
<dbReference type="EnsemblPlants" id="TraesKARUn01G0153130.1">
    <property type="protein sequence ID" value="cds.TraesKARUn01G0153130.1"/>
    <property type="gene ID" value="TraesKARUn01G0153130"/>
</dbReference>
<dbReference type="EnsemblPlants" id="TraesKARUn01G0153580.1">
    <property type="protein sequence ID" value="cds.TraesKARUn01G0153580.1"/>
    <property type="gene ID" value="TraesKARUn01G0153580"/>
</dbReference>
<dbReference type="EnsemblPlants" id="TraesKARUn01G0153660.1">
    <property type="protein sequence ID" value="cds.TraesKARUn01G0153660.1"/>
    <property type="gene ID" value="TraesKARUn01G0153660"/>
</dbReference>
<dbReference type="EnsemblPlants" id="TraesKARUn01G0154430.1">
    <property type="protein sequence ID" value="cds.TraesKARUn01G0154430.1"/>
    <property type="gene ID" value="TraesKARUn01G0154430"/>
</dbReference>
<dbReference type="EnsemblPlants" id="TraesKARUn01G0154700.1">
    <property type="protein sequence ID" value="cds.TraesKARUn01G0154700.1"/>
    <property type="gene ID" value="TraesKARUn01G0154700"/>
</dbReference>
<dbReference type="EnsemblPlants" id="TraesKARUn01G0160430.1">
    <property type="protein sequence ID" value="cds.TraesKARUn01G0160430.1"/>
    <property type="gene ID" value="TraesKARUn01G0160430"/>
</dbReference>
<dbReference type="EnsemblPlants" id="TraesKARUn01G0165610.1">
    <property type="protein sequence ID" value="cds.TraesKARUn01G0165610.1"/>
    <property type="gene ID" value="TraesKARUn01G0165610"/>
</dbReference>
<dbReference type="EnsemblPlants" id="TraesKARUn01G0165700.1">
    <property type="protein sequence ID" value="cds.TraesKARUn01G0165700.1"/>
    <property type="gene ID" value="TraesKARUn01G0165700"/>
</dbReference>
<dbReference type="EnsemblPlants" id="TraesKARUn01G0166040.1">
    <property type="protein sequence ID" value="cds.TraesKARUn01G0166040.1"/>
    <property type="gene ID" value="TraesKARUn01G0166040"/>
</dbReference>
<dbReference type="EnsemblPlants" id="TraesKARUn01G0166340.1">
    <property type="protein sequence ID" value="cds.TraesKARUn01G0166340.1"/>
    <property type="gene ID" value="TraesKARUn01G0166340"/>
</dbReference>
<dbReference type="EnsemblPlants" id="TraesKARUn01G0166480.1">
    <property type="protein sequence ID" value="cds.TraesKARUn01G0166480.1"/>
    <property type="gene ID" value="TraesKARUn01G0166480"/>
</dbReference>
<dbReference type="EnsemblPlants" id="TraesKARUn01G0166920.1">
    <property type="protein sequence ID" value="cds.TraesKARUn01G0166920.1"/>
    <property type="gene ID" value="TraesKARUn01G0166920"/>
</dbReference>
<dbReference type="EnsemblPlants" id="TraesKARUn01G0167200.1">
    <property type="protein sequence ID" value="cds.TraesKARUn01G0167200.1"/>
    <property type="gene ID" value="TraesKARUn01G0167200"/>
</dbReference>
<dbReference type="EnsemblPlants" id="TraesKARUn01G0174740.1">
    <property type="protein sequence ID" value="cds.TraesKARUn01G0174740.1"/>
    <property type="gene ID" value="TraesKARUn01G0174740"/>
</dbReference>
<dbReference type="EnsemblPlants" id="TraesKARUn01G0175830.1">
    <property type="protein sequence ID" value="cds.TraesKARUn01G0175830.1"/>
    <property type="gene ID" value="TraesKARUn01G0175830"/>
</dbReference>
<dbReference type="EnsemblPlants" id="TraesKARUn01G0179290.1">
    <property type="protein sequence ID" value="cds.TraesKARUn01G0179290.1"/>
    <property type="gene ID" value="TraesKARUn01G0179290"/>
</dbReference>
<dbReference type="EnsemblPlants" id="TraesKARUn01G0192690.1">
    <property type="protein sequence ID" value="cds.TraesKARUn01G0192690.1"/>
    <property type="gene ID" value="TraesKARUn01G0192690"/>
</dbReference>
<dbReference type="EnsemblPlants" id="TraesPARA_EIv1.0_2651040.1">
    <property type="protein sequence ID" value="TraesPARA_EIv1.0_2651040.1.CDS1"/>
    <property type="gene ID" value="TraesPARA_EIv1.0_2651040"/>
</dbReference>
<dbReference type="EnsemblPlants" id="TraesPARA_EIv1.0_2652180.1">
    <property type="protein sequence ID" value="TraesPARA_EIv1.0_2652180.1.CDS1"/>
    <property type="gene ID" value="TraesPARA_EIv1.0_2652180"/>
</dbReference>
<dbReference type="EnsemblPlants" id="TraesPARA_EIv1.0_2654010.1">
    <property type="protein sequence ID" value="TraesPARA_EIv1.0_2654010.1.CDS1"/>
    <property type="gene ID" value="TraesPARA_EIv1.0_2654010"/>
</dbReference>
<dbReference type="EnsemblPlants" id="TraesPARA_EIv1.0_2655750.1">
    <property type="protein sequence ID" value="TraesPARA_EIv1.0_2655750.1.CDS1"/>
    <property type="gene ID" value="TraesPARA_EIv1.0_2655750"/>
</dbReference>
<dbReference type="EnsemblPlants" id="TraesPARA_EIv1.0_2668040.1">
    <property type="protein sequence ID" value="TraesPARA_EIv1.0_2668040.1.CDS1"/>
    <property type="gene ID" value="TraesPARA_EIv1.0_2668040"/>
</dbReference>
<dbReference type="EnsemblPlants" id="TraesPARA_EIv1.0_2671650.1">
    <property type="protein sequence ID" value="TraesPARA_EIv1.0_2671650.1.CDS1"/>
    <property type="gene ID" value="TraesPARA_EIv1.0_2671650"/>
</dbReference>
<dbReference type="EnsemblPlants" id="TraesPARA_EIv1.0_2672740.1">
    <property type="protein sequence ID" value="TraesPARA_EIv1.0_2672740.1.CDS1"/>
    <property type="gene ID" value="TraesPARA_EIv1.0_2672740"/>
</dbReference>
<dbReference type="EnsemblPlants" id="TraesPARA_EIv1.0_2673810.1">
    <property type="protein sequence ID" value="TraesPARA_EIv1.0_2673810.1.CDS1"/>
    <property type="gene ID" value="TraesPARA_EIv1.0_2673810"/>
</dbReference>
<dbReference type="EnsemblPlants" id="TraesPARA_EIv1.0_2674500.1">
    <property type="protein sequence ID" value="TraesPARA_EIv1.0_2674500.1.CDS1"/>
    <property type="gene ID" value="TraesPARA_EIv1.0_2674500"/>
</dbReference>
<dbReference type="EnsemblPlants" id="TraesPARA_EIv1.0_2678780.1">
    <property type="protein sequence ID" value="TraesPARA_EIv1.0_2678780.1.CDS1"/>
    <property type="gene ID" value="TraesPARA_EIv1.0_2678780"/>
</dbReference>
<dbReference type="GeneID" id="803123"/>
<dbReference type="Gramene" id="TraesKARUn01G0035990.1">
    <property type="protein sequence ID" value="cds.TraesKARUn01G0035990.1"/>
    <property type="gene ID" value="TraesKARUn01G0035990"/>
</dbReference>
<dbReference type="Gramene" id="TraesKARUn01G0036270.1">
    <property type="protein sequence ID" value="cds.TraesKARUn01G0036270.1"/>
    <property type="gene ID" value="TraesKARUn01G0036270"/>
</dbReference>
<dbReference type="Gramene" id="TraesKARUn01G0065770.1">
    <property type="protein sequence ID" value="cds.TraesKARUn01G0065770.1"/>
    <property type="gene ID" value="TraesKARUn01G0065770"/>
</dbReference>
<dbReference type="Gramene" id="TraesKARUn01G0069640.1">
    <property type="protein sequence ID" value="cds.TraesKARUn01G0069640.1"/>
    <property type="gene ID" value="TraesKARUn01G0069640"/>
</dbReference>
<dbReference type="Gramene" id="TraesKARUn01G0071460.1">
    <property type="protein sequence ID" value="cds.TraesKARUn01G0071460.1"/>
    <property type="gene ID" value="TraesKARUn01G0071460"/>
</dbReference>
<dbReference type="Gramene" id="TraesKARUn01G0072470.1">
    <property type="protein sequence ID" value="cds.TraesKARUn01G0072470.1"/>
    <property type="gene ID" value="TraesKARUn01G0072470"/>
</dbReference>
<dbReference type="Gramene" id="TraesKARUn01G0074060.1">
    <property type="protein sequence ID" value="cds.TraesKARUn01G0074060.1"/>
    <property type="gene ID" value="TraesKARUn01G0074060"/>
</dbReference>
<dbReference type="Gramene" id="TraesKARUn01G0079960.1">
    <property type="protein sequence ID" value="cds.TraesKARUn01G0079960.1"/>
    <property type="gene ID" value="TraesKARUn01G0079960"/>
</dbReference>
<dbReference type="Gramene" id="TraesKARUn01G0080050.1">
    <property type="protein sequence ID" value="cds.TraesKARUn01G0080050.1"/>
    <property type="gene ID" value="TraesKARUn01G0080050"/>
</dbReference>
<dbReference type="Gramene" id="TraesKARUn01G0080190.1">
    <property type="protein sequence ID" value="cds.TraesKARUn01G0080190.1"/>
    <property type="gene ID" value="TraesKARUn01G0080190"/>
</dbReference>
<dbReference type="Gramene" id="TraesKARUn01G0081090.1">
    <property type="protein sequence ID" value="cds.TraesKARUn01G0081090.1"/>
    <property type="gene ID" value="TraesKARUn01G0081090"/>
</dbReference>
<dbReference type="Gramene" id="TraesKARUn01G0081710.1">
    <property type="protein sequence ID" value="cds.TraesKARUn01G0081710.1"/>
    <property type="gene ID" value="TraesKARUn01G0081710"/>
</dbReference>
<dbReference type="Gramene" id="TraesKARUn01G0082190.1">
    <property type="protein sequence ID" value="cds.TraesKARUn01G0082190.1"/>
    <property type="gene ID" value="TraesKARUn01G0082190"/>
</dbReference>
<dbReference type="Gramene" id="TraesKARUn01G0082380.1">
    <property type="protein sequence ID" value="cds.TraesKARUn01G0082380.1"/>
    <property type="gene ID" value="TraesKARUn01G0082380"/>
</dbReference>
<dbReference type="Gramene" id="TraesKARUn01G0082600.1">
    <property type="protein sequence ID" value="cds.TraesKARUn01G0082600.1"/>
    <property type="gene ID" value="TraesKARUn01G0082600"/>
</dbReference>
<dbReference type="Gramene" id="TraesKARUn01G0082740.1">
    <property type="protein sequence ID" value="cds.TraesKARUn01G0082740.1"/>
    <property type="gene ID" value="TraesKARUn01G0082740"/>
</dbReference>
<dbReference type="Gramene" id="TraesKARUn01G0087650.1">
    <property type="protein sequence ID" value="cds.TraesKARUn01G0087650.1"/>
    <property type="gene ID" value="TraesKARUn01G0087650"/>
</dbReference>
<dbReference type="Gramene" id="TraesKARUn01G0093730.1">
    <property type="protein sequence ID" value="cds.TraesKARUn01G0093730.1"/>
    <property type="gene ID" value="TraesKARUn01G0093730"/>
</dbReference>
<dbReference type="Gramene" id="TraesKARUn01G0095860.1">
    <property type="protein sequence ID" value="cds.TraesKARUn01G0095860.1"/>
    <property type="gene ID" value="TraesKARUn01G0095860"/>
</dbReference>
<dbReference type="Gramene" id="TraesKARUn01G0100450.1">
    <property type="protein sequence ID" value="cds.TraesKARUn01G0100450.1"/>
    <property type="gene ID" value="TraesKARUn01G0100450"/>
</dbReference>
<dbReference type="Gramene" id="TraesKARUn01G0108560.1">
    <property type="protein sequence ID" value="cds.TraesKARUn01G0108560.1"/>
    <property type="gene ID" value="TraesKARUn01G0108560"/>
</dbReference>
<dbReference type="Gramene" id="TraesKARUn01G0109010.1">
    <property type="protein sequence ID" value="cds.TraesKARUn01G0109010.1"/>
    <property type="gene ID" value="TraesKARUn01G0109010"/>
</dbReference>
<dbReference type="Gramene" id="TraesKARUn01G0109110.1">
    <property type="protein sequence ID" value="cds.TraesKARUn01G0109110.1"/>
    <property type="gene ID" value="TraesKARUn01G0109110"/>
</dbReference>
<dbReference type="Gramene" id="TraesKARUn01G0109260.1">
    <property type="protein sequence ID" value="cds.TraesKARUn01G0109260.1"/>
    <property type="gene ID" value="TraesKARUn01G0109260"/>
</dbReference>
<dbReference type="Gramene" id="TraesKARUn01G0112950.1">
    <property type="protein sequence ID" value="cds.TraesKARUn01G0112950.1"/>
    <property type="gene ID" value="TraesKARUn01G0112950"/>
</dbReference>
<dbReference type="Gramene" id="TraesKARUn01G0113870.1">
    <property type="protein sequence ID" value="cds.TraesKARUn01G0113870.1"/>
    <property type="gene ID" value="TraesKARUn01G0113870"/>
</dbReference>
<dbReference type="Gramene" id="TraesKARUn01G0115790.1">
    <property type="protein sequence ID" value="cds.TraesKARUn01G0115790.1"/>
    <property type="gene ID" value="TraesKARUn01G0115790"/>
</dbReference>
<dbReference type="Gramene" id="TraesKARUn01G0118640.1">
    <property type="protein sequence ID" value="cds.TraesKARUn01G0118640.1"/>
    <property type="gene ID" value="TraesKARUn01G0118640"/>
</dbReference>
<dbReference type="Gramene" id="TraesKARUn01G0121790.1">
    <property type="protein sequence ID" value="cds.TraesKARUn01G0121790.1"/>
    <property type="gene ID" value="TraesKARUn01G0121790"/>
</dbReference>
<dbReference type="Gramene" id="TraesKARUn01G0128690.1">
    <property type="protein sequence ID" value="cds.TraesKARUn01G0128690.1"/>
    <property type="gene ID" value="TraesKARUn01G0128690"/>
</dbReference>
<dbReference type="Gramene" id="TraesKARUn01G0137750.1">
    <property type="protein sequence ID" value="cds.TraesKARUn01G0137750.1"/>
    <property type="gene ID" value="TraesKARUn01G0137750"/>
</dbReference>
<dbReference type="Gramene" id="TraesKARUn01G0138370.1">
    <property type="protein sequence ID" value="cds.TraesKARUn01G0138370.1"/>
    <property type="gene ID" value="TraesKARUn01G0138370"/>
</dbReference>
<dbReference type="Gramene" id="TraesKARUn01G0143400.1">
    <property type="protein sequence ID" value="cds.TraesKARUn01G0143400.1"/>
    <property type="gene ID" value="TraesKARUn01G0143400"/>
</dbReference>
<dbReference type="Gramene" id="TraesKARUn01G0150110.1">
    <property type="protein sequence ID" value="cds.TraesKARUn01G0150110.1"/>
    <property type="gene ID" value="TraesKARUn01G0150110"/>
</dbReference>
<dbReference type="Gramene" id="TraesKARUn01G0150720.1">
    <property type="protein sequence ID" value="cds.TraesKARUn01G0150720.1"/>
    <property type="gene ID" value="TraesKARUn01G0150720"/>
</dbReference>
<dbReference type="Gramene" id="TraesKARUn01G0150830.1">
    <property type="protein sequence ID" value="cds.TraesKARUn01G0150830.1"/>
    <property type="gene ID" value="TraesKARUn01G0150830"/>
</dbReference>
<dbReference type="Gramene" id="TraesKARUn01G0151090.1">
    <property type="protein sequence ID" value="cds.TraesKARUn01G0151090.1"/>
    <property type="gene ID" value="TraesKARUn01G0151090"/>
</dbReference>
<dbReference type="Gramene" id="TraesKARUn01G0151100.1">
    <property type="protein sequence ID" value="cds.TraesKARUn01G0151100.1"/>
    <property type="gene ID" value="TraesKARUn01G0151100"/>
</dbReference>
<dbReference type="Gramene" id="TraesKARUn01G0151480.1">
    <property type="protein sequence ID" value="cds.TraesKARUn01G0151480.1"/>
    <property type="gene ID" value="TraesKARUn01G0151480"/>
</dbReference>
<dbReference type="Gramene" id="TraesKARUn01G0151640.1">
    <property type="protein sequence ID" value="cds.TraesKARUn01G0151640.1"/>
    <property type="gene ID" value="TraesKARUn01G0151640"/>
</dbReference>
<dbReference type="Gramene" id="TraesKARUn01G0151900.1">
    <property type="protein sequence ID" value="cds.TraesKARUn01G0151900.1"/>
    <property type="gene ID" value="TraesKARUn01G0151900"/>
</dbReference>
<dbReference type="Gramene" id="TraesKARUn01G0151980.1">
    <property type="protein sequence ID" value="cds.TraesKARUn01G0151980.1"/>
    <property type="gene ID" value="TraesKARUn01G0151980"/>
</dbReference>
<dbReference type="Gramene" id="TraesKARUn01G0152400.1">
    <property type="protein sequence ID" value="cds.TraesKARUn01G0152400.1"/>
    <property type="gene ID" value="TraesKARUn01G0152400"/>
</dbReference>
<dbReference type="Gramene" id="TraesKARUn01G0152540.1">
    <property type="protein sequence ID" value="cds.TraesKARUn01G0152540.1"/>
    <property type="gene ID" value="TraesKARUn01G0152540"/>
</dbReference>
<dbReference type="Gramene" id="TraesKARUn01G0153130.1">
    <property type="protein sequence ID" value="cds.TraesKARUn01G0153130.1"/>
    <property type="gene ID" value="TraesKARUn01G0153130"/>
</dbReference>
<dbReference type="Gramene" id="TraesKARUn01G0153580.1">
    <property type="protein sequence ID" value="cds.TraesKARUn01G0153580.1"/>
    <property type="gene ID" value="TraesKARUn01G0153580"/>
</dbReference>
<dbReference type="Gramene" id="TraesKARUn01G0153660.1">
    <property type="protein sequence ID" value="cds.TraesKARUn01G0153660.1"/>
    <property type="gene ID" value="TraesKARUn01G0153660"/>
</dbReference>
<dbReference type="Gramene" id="TraesKARUn01G0154430.1">
    <property type="protein sequence ID" value="cds.TraesKARUn01G0154430.1"/>
    <property type="gene ID" value="TraesKARUn01G0154430"/>
</dbReference>
<dbReference type="Gramene" id="TraesKARUn01G0154700.1">
    <property type="protein sequence ID" value="cds.TraesKARUn01G0154700.1"/>
    <property type="gene ID" value="TraesKARUn01G0154700"/>
</dbReference>
<dbReference type="Gramene" id="TraesKARUn01G0160430.1">
    <property type="protein sequence ID" value="cds.TraesKARUn01G0160430.1"/>
    <property type="gene ID" value="TraesKARUn01G0160430"/>
</dbReference>
<dbReference type="Gramene" id="TraesKARUn01G0165610.1">
    <property type="protein sequence ID" value="cds.TraesKARUn01G0165610.1"/>
    <property type="gene ID" value="TraesKARUn01G0165610"/>
</dbReference>
<dbReference type="Gramene" id="TraesKARUn01G0165700.1">
    <property type="protein sequence ID" value="cds.TraesKARUn01G0165700.1"/>
    <property type="gene ID" value="TraesKARUn01G0165700"/>
</dbReference>
<dbReference type="Gramene" id="TraesKARUn01G0166040.1">
    <property type="protein sequence ID" value="cds.TraesKARUn01G0166040.1"/>
    <property type="gene ID" value="TraesKARUn01G0166040"/>
</dbReference>
<dbReference type="Gramene" id="TraesKARUn01G0166340.1">
    <property type="protein sequence ID" value="cds.TraesKARUn01G0166340.1"/>
    <property type="gene ID" value="TraesKARUn01G0166340"/>
</dbReference>
<dbReference type="Gramene" id="TraesKARUn01G0166480.1">
    <property type="protein sequence ID" value="cds.TraesKARUn01G0166480.1"/>
    <property type="gene ID" value="TraesKARUn01G0166480"/>
</dbReference>
<dbReference type="Gramene" id="TraesKARUn01G0166920.1">
    <property type="protein sequence ID" value="cds.TraesKARUn01G0166920.1"/>
    <property type="gene ID" value="TraesKARUn01G0166920"/>
</dbReference>
<dbReference type="Gramene" id="TraesKARUn01G0167200.1">
    <property type="protein sequence ID" value="cds.TraesKARUn01G0167200.1"/>
    <property type="gene ID" value="TraesKARUn01G0167200"/>
</dbReference>
<dbReference type="Gramene" id="TraesKARUn01G0174740.1">
    <property type="protein sequence ID" value="cds.TraesKARUn01G0174740.1"/>
    <property type="gene ID" value="TraesKARUn01G0174740"/>
</dbReference>
<dbReference type="Gramene" id="TraesKARUn01G0175830.1">
    <property type="protein sequence ID" value="cds.TraesKARUn01G0175830.1"/>
    <property type="gene ID" value="TraesKARUn01G0175830"/>
</dbReference>
<dbReference type="Gramene" id="TraesKARUn01G0179290.1">
    <property type="protein sequence ID" value="cds.TraesKARUn01G0179290.1"/>
    <property type="gene ID" value="TraesKARUn01G0179290"/>
</dbReference>
<dbReference type="Gramene" id="TraesKARUn01G0192690.1">
    <property type="protein sequence ID" value="cds.TraesKARUn01G0192690.1"/>
    <property type="gene ID" value="TraesKARUn01G0192690"/>
</dbReference>
<dbReference type="Gramene" id="TraesPARA_EIv1.0_2651040.1">
    <property type="protein sequence ID" value="TraesPARA_EIv1.0_2651040.1.CDS1"/>
    <property type="gene ID" value="TraesPARA_EIv1.0_2651040"/>
</dbReference>
<dbReference type="Gramene" id="TraesPARA_EIv1.0_2652180.1">
    <property type="protein sequence ID" value="TraesPARA_EIv1.0_2652180.1.CDS1"/>
    <property type="gene ID" value="TraesPARA_EIv1.0_2652180"/>
</dbReference>
<dbReference type="Gramene" id="TraesPARA_EIv1.0_2654010.1">
    <property type="protein sequence ID" value="TraesPARA_EIv1.0_2654010.1.CDS1"/>
    <property type="gene ID" value="TraesPARA_EIv1.0_2654010"/>
</dbReference>
<dbReference type="Gramene" id="TraesPARA_EIv1.0_2655750.1">
    <property type="protein sequence ID" value="TraesPARA_EIv1.0_2655750.1.CDS1"/>
    <property type="gene ID" value="TraesPARA_EIv1.0_2655750"/>
</dbReference>
<dbReference type="Gramene" id="TraesPARA_EIv1.0_2668040.1">
    <property type="protein sequence ID" value="TraesPARA_EIv1.0_2668040.1.CDS1"/>
    <property type="gene ID" value="TraesPARA_EIv1.0_2668040"/>
</dbReference>
<dbReference type="Gramene" id="TraesPARA_EIv1.0_2671650.1">
    <property type="protein sequence ID" value="TraesPARA_EIv1.0_2671650.1.CDS1"/>
    <property type="gene ID" value="TraesPARA_EIv1.0_2671650"/>
</dbReference>
<dbReference type="Gramene" id="TraesPARA_EIv1.0_2672740.1">
    <property type="protein sequence ID" value="TraesPARA_EIv1.0_2672740.1.CDS1"/>
    <property type="gene ID" value="TraesPARA_EIv1.0_2672740"/>
</dbReference>
<dbReference type="Gramene" id="TraesPARA_EIv1.0_2673810.1">
    <property type="protein sequence ID" value="TraesPARA_EIv1.0_2673810.1.CDS1"/>
    <property type="gene ID" value="TraesPARA_EIv1.0_2673810"/>
</dbReference>
<dbReference type="Gramene" id="TraesPARA_EIv1.0_2674500.1">
    <property type="protein sequence ID" value="TraesPARA_EIv1.0_2674500.1.CDS1"/>
    <property type="gene ID" value="TraesPARA_EIv1.0_2674500"/>
</dbReference>
<dbReference type="Gramene" id="TraesPARA_EIv1.0_2678780.1">
    <property type="protein sequence ID" value="TraesPARA_EIv1.0_2678780.1.CDS1"/>
    <property type="gene ID" value="TraesPARA_EIv1.0_2678780"/>
</dbReference>
<dbReference type="KEGG" id="taes:803123"/>
<dbReference type="eggNOG" id="ENOG502QPYA">
    <property type="taxonomic scope" value="Eukaryota"/>
</dbReference>
<dbReference type="HOGENOM" id="CLU_030022_2_0_1"/>
<dbReference type="Proteomes" id="UP000019116">
    <property type="component" value="Chloroplast"/>
</dbReference>
<dbReference type="ExpressionAtlas" id="Q9XPS8">
    <property type="expression patterns" value="baseline and differential"/>
</dbReference>
<dbReference type="GO" id="GO:0009507">
    <property type="term" value="C:chloroplast"/>
    <property type="evidence" value="ECO:0007669"/>
    <property type="project" value="UniProtKB-SubCell"/>
</dbReference>
<dbReference type="GO" id="GO:0000428">
    <property type="term" value="C:DNA-directed RNA polymerase complex"/>
    <property type="evidence" value="ECO:0007669"/>
    <property type="project" value="UniProtKB-KW"/>
</dbReference>
<dbReference type="GO" id="GO:0005739">
    <property type="term" value="C:mitochondrion"/>
    <property type="evidence" value="ECO:0007669"/>
    <property type="project" value="GOC"/>
</dbReference>
<dbReference type="GO" id="GO:0003677">
    <property type="term" value="F:DNA binding"/>
    <property type="evidence" value="ECO:0007669"/>
    <property type="project" value="UniProtKB-UniRule"/>
</dbReference>
<dbReference type="GO" id="GO:0003899">
    <property type="term" value="F:DNA-directed RNA polymerase activity"/>
    <property type="evidence" value="ECO:0007669"/>
    <property type="project" value="UniProtKB-UniRule"/>
</dbReference>
<dbReference type="GO" id="GO:0000287">
    <property type="term" value="F:magnesium ion binding"/>
    <property type="evidence" value="ECO:0007669"/>
    <property type="project" value="UniProtKB-UniRule"/>
</dbReference>
<dbReference type="GO" id="GO:0008270">
    <property type="term" value="F:zinc ion binding"/>
    <property type="evidence" value="ECO:0007669"/>
    <property type="project" value="UniProtKB-UniRule"/>
</dbReference>
<dbReference type="GO" id="GO:0006351">
    <property type="term" value="P:DNA-templated transcription"/>
    <property type="evidence" value="ECO:0007669"/>
    <property type="project" value="UniProtKB-UniRule"/>
</dbReference>
<dbReference type="Gene3D" id="1.10.40.90">
    <property type="match status" value="1"/>
</dbReference>
<dbReference type="Gene3D" id="2.40.40.20">
    <property type="match status" value="1"/>
</dbReference>
<dbReference type="Gene3D" id="4.10.860.120">
    <property type="entry name" value="RNA polymerase II, clamp domain"/>
    <property type="match status" value="1"/>
</dbReference>
<dbReference type="Gene3D" id="1.10.274.100">
    <property type="entry name" value="RNA polymerase Rpb1, domain 3"/>
    <property type="match status" value="1"/>
</dbReference>
<dbReference type="HAMAP" id="MF_01323">
    <property type="entry name" value="RNApol_bact_RpoC1"/>
    <property type="match status" value="1"/>
</dbReference>
<dbReference type="InterPro" id="IPR045867">
    <property type="entry name" value="DNA-dir_RpoC_beta_prime"/>
</dbReference>
<dbReference type="InterPro" id="IPR000722">
    <property type="entry name" value="RNA_pol_asu"/>
</dbReference>
<dbReference type="InterPro" id="IPR006592">
    <property type="entry name" value="RNA_pol_N"/>
</dbReference>
<dbReference type="InterPro" id="IPR007080">
    <property type="entry name" value="RNA_pol_Rpb1_1"/>
</dbReference>
<dbReference type="InterPro" id="IPR042102">
    <property type="entry name" value="RNA_pol_Rpb1_3_sf"/>
</dbReference>
<dbReference type="InterPro" id="IPR044893">
    <property type="entry name" value="RNA_pol_Rpb1_clamp_domain"/>
</dbReference>
<dbReference type="InterPro" id="IPR034678">
    <property type="entry name" value="RNApol_RpoC1"/>
</dbReference>
<dbReference type="PANTHER" id="PTHR19376">
    <property type="entry name" value="DNA-DIRECTED RNA POLYMERASE"/>
    <property type="match status" value="1"/>
</dbReference>
<dbReference type="PANTHER" id="PTHR19376:SF54">
    <property type="entry name" value="DNA-DIRECTED RNA POLYMERASE SUBUNIT BETA"/>
    <property type="match status" value="1"/>
</dbReference>
<dbReference type="Pfam" id="PF04997">
    <property type="entry name" value="RNA_pol_Rpb1_1"/>
    <property type="match status" value="1"/>
</dbReference>
<dbReference type="Pfam" id="PF00623">
    <property type="entry name" value="RNA_pol_Rpb1_2"/>
    <property type="match status" value="2"/>
</dbReference>
<dbReference type="SMART" id="SM00663">
    <property type="entry name" value="RPOLA_N"/>
    <property type="match status" value="1"/>
</dbReference>
<dbReference type="SUPFAM" id="SSF64484">
    <property type="entry name" value="beta and beta-prime subunits of DNA dependent RNA-polymerase"/>
    <property type="match status" value="1"/>
</dbReference>
<evidence type="ECO:0000255" key="1">
    <source>
        <dbReference type="HAMAP-Rule" id="MF_01323"/>
    </source>
</evidence>